<feature type="signal peptide" evidence="3">
    <location>
        <begin position="1"/>
        <end position="21"/>
    </location>
</feature>
<feature type="chain" id="PRO_0000427710" description="Lipoprotein LpqH">
    <location>
        <begin position="22"/>
        <end position="159"/>
    </location>
</feature>
<feature type="region of interest" description="Disordered" evidence="2">
    <location>
        <begin position="24"/>
        <end position="51"/>
    </location>
</feature>
<feature type="compositionally biased region" description="Low complexity" evidence="2">
    <location>
        <begin position="27"/>
        <end position="49"/>
    </location>
</feature>
<feature type="lipid moiety-binding region" description="N-palmitoyl cysteine" evidence="3">
    <location>
        <position position="22"/>
    </location>
</feature>
<feature type="lipid moiety-binding region" description="S-diacylglycerol cysteine" evidence="3">
    <location>
        <position position="22"/>
    </location>
</feature>
<name>LPQH_MYCTO</name>
<protein>
    <recommendedName>
        <fullName>Lipoprotein LpqH</fullName>
    </recommendedName>
    <alternativeName>
        <fullName>19 kDa lipoprotein antigen</fullName>
    </alternativeName>
    <alternativeName>
        <fullName>Putative transporter LpqH</fullName>
    </alternativeName>
</protein>
<comment type="function">
    <text evidence="1">Might be involved in ligand transport. A host TLR2 agonist, modifies host gene expression in response to pathogen.</text>
</comment>
<comment type="subcellular location">
    <subcellularLocation>
        <location evidence="3">Cell membrane</location>
        <topology evidence="3">Lipid-anchor</topology>
    </subcellularLocation>
</comment>
<comment type="domain">
    <text evidence="1">Forms a U-shaped beta-half-barrel with a large hydrophobic cavity.</text>
</comment>
<comment type="PTM">
    <text evidence="1">Modified by Lgt on Cys-22 with an S-linked diacylglycerol with a mixture of C16, C18 and C19 fatty acids, signal peptide is removed by LspA, modifed by Lnt with an amide-linked mixture of C16 and C19 fatty acids.</text>
</comment>
<comment type="similarity">
    <text evidence="3">Belongs to the mycobacterial 19 kDa antigen family.</text>
</comment>
<reference key="1">
    <citation type="journal article" date="2002" name="J. Bacteriol.">
        <title>Whole-genome comparison of Mycobacterium tuberculosis clinical and laboratory strains.</title>
        <authorList>
            <person name="Fleischmann R.D."/>
            <person name="Alland D."/>
            <person name="Eisen J.A."/>
            <person name="Carpenter L."/>
            <person name="White O."/>
            <person name="Peterson J.D."/>
            <person name="DeBoy R.T."/>
            <person name="Dodson R.J."/>
            <person name="Gwinn M.L."/>
            <person name="Haft D.H."/>
            <person name="Hickey E.K."/>
            <person name="Kolonay J.F."/>
            <person name="Nelson W.C."/>
            <person name="Umayam L.A."/>
            <person name="Ermolaeva M.D."/>
            <person name="Salzberg S.L."/>
            <person name="Delcher A."/>
            <person name="Utterback T.R."/>
            <person name="Weidman J.F."/>
            <person name="Khouri H.M."/>
            <person name="Gill J."/>
            <person name="Mikula A."/>
            <person name="Bishai W."/>
            <person name="Jacobs W.R. Jr."/>
            <person name="Venter J.C."/>
            <person name="Fraser C.M."/>
        </authorList>
    </citation>
    <scope>NUCLEOTIDE SEQUENCE [LARGE SCALE GENOMIC DNA]</scope>
    <source>
        <strain>CDC 1551 / Oshkosh</strain>
    </source>
</reference>
<proteinExistence type="inferred from homology"/>
<organism>
    <name type="scientific">Mycobacterium tuberculosis (strain CDC 1551 / Oshkosh)</name>
    <dbReference type="NCBI Taxonomy" id="83331"/>
    <lineage>
        <taxon>Bacteria</taxon>
        <taxon>Bacillati</taxon>
        <taxon>Actinomycetota</taxon>
        <taxon>Actinomycetes</taxon>
        <taxon>Mycobacteriales</taxon>
        <taxon>Mycobacteriaceae</taxon>
        <taxon>Mycobacterium</taxon>
        <taxon>Mycobacterium tuberculosis complex</taxon>
    </lineage>
</organism>
<keyword id="KW-1003">Cell membrane</keyword>
<keyword id="KW-0449">Lipoprotein</keyword>
<keyword id="KW-0472">Membrane</keyword>
<keyword id="KW-0564">Palmitate</keyword>
<keyword id="KW-1185">Reference proteome</keyword>
<keyword id="KW-0732">Signal</keyword>
<keyword id="KW-0813">Transport</keyword>
<keyword id="KW-0843">Virulence</keyword>
<dbReference type="EMBL" id="AE000516">
    <property type="protein sequence ID" value="AAK48234.1"/>
    <property type="molecule type" value="Genomic_DNA"/>
</dbReference>
<dbReference type="PIR" id="D70801">
    <property type="entry name" value="D70801"/>
</dbReference>
<dbReference type="RefSeq" id="WP_003917838.1">
    <property type="nucleotide sequence ID" value="NZ_KK341227.1"/>
</dbReference>
<dbReference type="SMR" id="P9WK60"/>
<dbReference type="KEGG" id="mtc:MT3870"/>
<dbReference type="PATRIC" id="fig|83331.31.peg.4165"/>
<dbReference type="HOGENOM" id="CLU_117599_0_0_11"/>
<dbReference type="Proteomes" id="UP000001020">
    <property type="component" value="Chromosome"/>
</dbReference>
<dbReference type="GO" id="GO:0005886">
    <property type="term" value="C:plasma membrane"/>
    <property type="evidence" value="ECO:0007669"/>
    <property type="project" value="UniProtKB-SubCell"/>
</dbReference>
<dbReference type="InterPro" id="IPR008691">
    <property type="entry name" value="LpqH"/>
</dbReference>
<dbReference type="Pfam" id="PF05481">
    <property type="entry name" value="Myco_19_kDa"/>
    <property type="match status" value="1"/>
</dbReference>
<dbReference type="PROSITE" id="PS51257">
    <property type="entry name" value="PROKAR_LIPOPROTEIN"/>
    <property type="match status" value="1"/>
</dbReference>
<evidence type="ECO:0000250" key="1">
    <source>
        <dbReference type="UniProtKB" id="P9WK61"/>
    </source>
</evidence>
<evidence type="ECO:0000256" key="2">
    <source>
        <dbReference type="SAM" id="MobiDB-lite"/>
    </source>
</evidence>
<evidence type="ECO:0000305" key="3"/>
<gene>
    <name type="primary">lpqH</name>
    <name type="ordered locus">MT3870</name>
</gene>
<sequence>MKRGLTVAVAGAAILVAGLSGCSSNKSTTGSGETTTAAGTTASPGAASGPKVVIDGKDQNVTGSVVCTTAAGNVNIAIGGAATGIAAVLTDGNPPEVKSVGLGNVNGVTLGYTSGTGQGNASATKDGSHYKITGTATGVDMANPMSPVNKSFEIEVTSS</sequence>
<accession>P9WK60</accession>
<accession>L0TGP1</accession>
<accession>P0A5J0</accession>
<accession>P11572</accession>